<gene>
    <name type="primary">CIPK14</name>
    <name type="synonym">PKS24</name>
    <name type="synonym">SnRK3.15</name>
    <name type="synonym">SR1</name>
    <name type="ordered locus">At5g01820</name>
    <name type="ORF">T20L15.90</name>
</gene>
<proteinExistence type="evidence at protein level"/>
<feature type="chain" id="PRO_0000337216" description="CBL-interacting serine/threonine-protein kinase 14">
    <location>
        <begin position="1"/>
        <end position="442"/>
    </location>
</feature>
<feature type="domain" description="Protein kinase" evidence="4">
    <location>
        <begin position="22"/>
        <end position="276"/>
    </location>
</feature>
<feature type="domain" description="NAF" evidence="5">
    <location>
        <begin position="305"/>
        <end position="329"/>
    </location>
</feature>
<feature type="region of interest" description="Activation loop" evidence="1">
    <location>
        <begin position="162"/>
        <end position="191"/>
    </location>
</feature>
<feature type="region of interest" description="PPI" evidence="1">
    <location>
        <begin position="335"/>
        <end position="365"/>
    </location>
</feature>
<feature type="active site" description="Proton acceptor" evidence="4 6">
    <location>
        <position position="144"/>
    </location>
</feature>
<feature type="binding site" evidence="4">
    <location>
        <begin position="28"/>
        <end position="36"/>
    </location>
    <ligand>
        <name>ATP</name>
        <dbReference type="ChEBI" id="CHEBI:30616"/>
    </ligand>
</feature>
<feature type="binding site" evidence="4">
    <location>
        <position position="51"/>
    </location>
    <ligand>
        <name>ATP</name>
        <dbReference type="ChEBI" id="CHEBI:30616"/>
    </ligand>
</feature>
<feature type="modified residue" description="Phosphoserine" evidence="3">
    <location>
        <position position="166"/>
    </location>
</feature>
<feature type="modified residue" description="Phosphothreonine" evidence="2">
    <location>
        <position position="180"/>
    </location>
</feature>
<feature type="mutagenesis site" description="No effect on binding to CBL2." evidence="10">
    <original>N</original>
    <variation>A</variation>
    <location>
        <position position="311"/>
    </location>
</feature>
<feature type="mutagenesis site" description="Loss of binding to CBL2." evidence="10">
    <original>F</original>
    <variation>A</variation>
    <location>
        <position position="313"/>
    </location>
</feature>
<feature type="mutagenesis site" description="No effect on binding to CBL2." evidence="10">
    <original>I</original>
    <variation>A</variation>
    <location>
        <position position="316"/>
    </location>
</feature>
<feature type="mutagenesis site" description="No effect on binding to CBL2." evidence="10">
    <original>S</original>
    <variation>A</variation>
    <variation>D</variation>
    <location>
        <position position="319"/>
    </location>
</feature>
<feature type="mutagenesis site" description="Loss of binding to CBL2." evidence="10">
    <original>F</original>
    <variation>A</variation>
    <location>
        <position position="322"/>
    </location>
</feature>
<feature type="mutagenesis site" description="No effect on binding to CBL2.">
    <original>L</original>
    <variation>A</variation>
    <location>
        <position position="324"/>
    </location>
</feature>
<feature type="mutagenesis site" description="No effect on binding to CBL2." evidence="10">
    <original>L</original>
    <variation>A</variation>
    <location>
        <position position="327"/>
    </location>
</feature>
<feature type="mutagenesis site" description="No effect on binding to CBL2." evidence="10">
    <original>F</original>
    <variation>A</variation>
    <location>
        <position position="328"/>
    </location>
</feature>
<feature type="mutagenesis site" description="No effect on binding to CBL2.">
    <original>R</original>
    <variation>A</variation>
    <location>
        <position position="336"/>
    </location>
</feature>
<feature type="mutagenesis site" description="No effect on binding to CBL2." evidence="10">
    <original>R</original>
    <variation>A</variation>
    <location>
        <position position="339"/>
    </location>
</feature>
<feature type="helix" evidence="14">
    <location>
        <begin position="312"/>
        <end position="317"/>
    </location>
</feature>
<feature type="strand" evidence="14">
    <location>
        <begin position="322"/>
        <end position="324"/>
    </location>
</feature>
<feature type="helix" evidence="14">
    <location>
        <begin position="325"/>
        <end position="331"/>
    </location>
</feature>
<feature type="strand" evidence="14">
    <location>
        <begin position="338"/>
        <end position="344"/>
    </location>
</feature>
<feature type="helix" evidence="14">
    <location>
        <begin position="346"/>
        <end position="359"/>
    </location>
</feature>
<feature type="strand" evidence="14">
    <location>
        <begin position="363"/>
        <end position="368"/>
    </location>
</feature>
<feature type="strand" evidence="14">
    <location>
        <begin position="371"/>
        <end position="376"/>
    </location>
</feature>
<feature type="helix" evidence="14">
    <location>
        <begin position="377"/>
        <end position="379"/>
    </location>
</feature>
<feature type="strand" evidence="14">
    <location>
        <begin position="381"/>
        <end position="389"/>
    </location>
</feature>
<feature type="strand" evidence="14">
    <location>
        <begin position="391"/>
        <end position="393"/>
    </location>
</feature>
<feature type="strand" evidence="14">
    <location>
        <begin position="395"/>
        <end position="404"/>
    </location>
</feature>
<feature type="helix" evidence="14">
    <location>
        <begin position="412"/>
        <end position="415"/>
    </location>
</feature>
<feature type="helix" evidence="14">
    <location>
        <begin position="417"/>
        <end position="423"/>
    </location>
</feature>
<dbReference type="EC" id="2.7.11.1"/>
<dbReference type="EMBL" id="AF295669">
    <property type="protein sequence ID" value="AAK16689.1"/>
    <property type="molecule type" value="mRNA"/>
</dbReference>
<dbReference type="EMBL" id="AB035147">
    <property type="protein sequence ID" value="BAB11737.1"/>
    <property type="molecule type" value="mRNA"/>
</dbReference>
<dbReference type="EMBL" id="AL162351">
    <property type="protein sequence ID" value="CAB82752.1"/>
    <property type="molecule type" value="Genomic_DNA"/>
</dbReference>
<dbReference type="EMBL" id="CP002688">
    <property type="protein sequence ID" value="AED90397.1"/>
    <property type="molecule type" value="Genomic_DNA"/>
</dbReference>
<dbReference type="EMBL" id="AF360189">
    <property type="protein sequence ID" value="AAK25899.1"/>
    <property type="molecule type" value="mRNA"/>
</dbReference>
<dbReference type="EMBL" id="AY142684">
    <property type="protein sequence ID" value="AAN13222.1"/>
    <property type="molecule type" value="mRNA"/>
</dbReference>
<dbReference type="PIR" id="T48203">
    <property type="entry name" value="T48203"/>
</dbReference>
<dbReference type="RefSeq" id="NP_195802.1">
    <property type="nucleotide sequence ID" value="NM_120260.3"/>
</dbReference>
<dbReference type="PDB" id="2ZFD">
    <property type="method" value="X-ray"/>
    <property type="resolution" value="1.20 A"/>
    <property type="chains" value="B=305-427"/>
</dbReference>
<dbReference type="PDBsum" id="2ZFD"/>
<dbReference type="SMR" id="Q9LZW4"/>
<dbReference type="BioGRID" id="17041">
    <property type="interactions" value="54"/>
</dbReference>
<dbReference type="FunCoup" id="Q9LZW4">
    <property type="interactions" value="885"/>
</dbReference>
<dbReference type="IntAct" id="Q9LZW4">
    <property type="interactions" value="16"/>
</dbReference>
<dbReference type="STRING" id="3702.Q9LZW4"/>
<dbReference type="iPTMnet" id="Q9LZW4"/>
<dbReference type="PaxDb" id="3702-AT5G01820.1"/>
<dbReference type="ProteomicsDB" id="246799"/>
<dbReference type="DNASU" id="831765"/>
<dbReference type="EnsemblPlants" id="AT5G01820.1">
    <property type="protein sequence ID" value="AT5G01820.1"/>
    <property type="gene ID" value="AT5G01820"/>
</dbReference>
<dbReference type="GeneID" id="831765"/>
<dbReference type="Gramene" id="AT5G01820.1">
    <property type="protein sequence ID" value="AT5G01820.1"/>
    <property type="gene ID" value="AT5G01820"/>
</dbReference>
<dbReference type="KEGG" id="ath:AT5G01820"/>
<dbReference type="Araport" id="AT5G01820"/>
<dbReference type="TAIR" id="AT5G01820">
    <property type="gene designation" value="SR1"/>
</dbReference>
<dbReference type="eggNOG" id="KOG0583">
    <property type="taxonomic scope" value="Eukaryota"/>
</dbReference>
<dbReference type="HOGENOM" id="CLU_000288_59_0_1"/>
<dbReference type="InParanoid" id="Q9LZW4"/>
<dbReference type="OMA" id="QKGNFAM"/>
<dbReference type="PhylomeDB" id="Q9LZW4"/>
<dbReference type="EvolutionaryTrace" id="Q9LZW4"/>
<dbReference type="PRO" id="PR:Q9LZW4"/>
<dbReference type="Proteomes" id="UP000006548">
    <property type="component" value="Chromosome 5"/>
</dbReference>
<dbReference type="ExpressionAtlas" id="Q9LZW4">
    <property type="expression patterns" value="baseline and differential"/>
</dbReference>
<dbReference type="GO" id="GO:0005737">
    <property type="term" value="C:cytoplasm"/>
    <property type="evidence" value="ECO:0000314"/>
    <property type="project" value="UniProtKB"/>
</dbReference>
<dbReference type="GO" id="GO:0005634">
    <property type="term" value="C:nucleus"/>
    <property type="evidence" value="ECO:0000314"/>
    <property type="project" value="UniProtKB"/>
</dbReference>
<dbReference type="GO" id="GO:0000325">
    <property type="term" value="C:plant-type vacuole"/>
    <property type="evidence" value="ECO:0007005"/>
    <property type="project" value="TAIR"/>
</dbReference>
<dbReference type="GO" id="GO:0009506">
    <property type="term" value="C:plasmodesma"/>
    <property type="evidence" value="ECO:0007005"/>
    <property type="project" value="TAIR"/>
</dbReference>
<dbReference type="GO" id="GO:0005524">
    <property type="term" value="F:ATP binding"/>
    <property type="evidence" value="ECO:0007669"/>
    <property type="project" value="UniProtKB-KW"/>
</dbReference>
<dbReference type="GO" id="GO:0019900">
    <property type="term" value="F:kinase binding"/>
    <property type="evidence" value="ECO:0000353"/>
    <property type="project" value="UniProtKB"/>
</dbReference>
<dbReference type="GO" id="GO:0106310">
    <property type="term" value="F:protein serine kinase activity"/>
    <property type="evidence" value="ECO:0007669"/>
    <property type="project" value="RHEA"/>
</dbReference>
<dbReference type="GO" id="GO:0004674">
    <property type="term" value="F:protein serine/threonine kinase activity"/>
    <property type="evidence" value="ECO:0007669"/>
    <property type="project" value="UniProtKB-KW"/>
</dbReference>
<dbReference type="GO" id="GO:0009737">
    <property type="term" value="P:response to abscisic acid"/>
    <property type="evidence" value="ECO:0000270"/>
    <property type="project" value="UniProtKB"/>
</dbReference>
<dbReference type="GO" id="GO:0009409">
    <property type="term" value="P:response to cold"/>
    <property type="evidence" value="ECO:0000270"/>
    <property type="project" value="UniProtKB"/>
</dbReference>
<dbReference type="GO" id="GO:0009749">
    <property type="term" value="P:response to glucose"/>
    <property type="evidence" value="ECO:0000270"/>
    <property type="project" value="UniProtKB"/>
</dbReference>
<dbReference type="GO" id="GO:0009408">
    <property type="term" value="P:response to heat"/>
    <property type="evidence" value="ECO:0000270"/>
    <property type="project" value="UniProtKB"/>
</dbReference>
<dbReference type="GO" id="GO:0006979">
    <property type="term" value="P:response to oxidative stress"/>
    <property type="evidence" value="ECO:0000270"/>
    <property type="project" value="UniProtKB"/>
</dbReference>
<dbReference type="GO" id="GO:0009651">
    <property type="term" value="P:response to salt stress"/>
    <property type="evidence" value="ECO:0000270"/>
    <property type="project" value="UniProtKB"/>
</dbReference>
<dbReference type="GO" id="GO:0009414">
    <property type="term" value="P:response to water deprivation"/>
    <property type="evidence" value="ECO:0000270"/>
    <property type="project" value="UniProtKB"/>
</dbReference>
<dbReference type="GO" id="GO:0007165">
    <property type="term" value="P:signal transduction"/>
    <property type="evidence" value="ECO:0007669"/>
    <property type="project" value="InterPro"/>
</dbReference>
<dbReference type="CDD" id="cd12195">
    <property type="entry name" value="CIPK_C"/>
    <property type="match status" value="1"/>
</dbReference>
<dbReference type="FunFam" id="3.30.200.20:FF:000042">
    <property type="entry name" value="Aurora kinase A"/>
    <property type="match status" value="1"/>
</dbReference>
<dbReference type="FunFam" id="1.10.510.10:FF:000653">
    <property type="entry name" value="Non-specific serine/threonine protein kinase"/>
    <property type="match status" value="1"/>
</dbReference>
<dbReference type="FunFam" id="3.30.310.80:FF:000005">
    <property type="entry name" value="Non-specific serine/threonine protein kinase"/>
    <property type="match status" value="1"/>
</dbReference>
<dbReference type="Gene3D" id="3.30.310.80">
    <property type="entry name" value="Kinase associated domain 1, KA1"/>
    <property type="match status" value="1"/>
</dbReference>
<dbReference type="Gene3D" id="3.30.200.20">
    <property type="entry name" value="Phosphorylase Kinase, domain 1"/>
    <property type="match status" value="1"/>
</dbReference>
<dbReference type="Gene3D" id="1.10.510.10">
    <property type="entry name" value="Transferase(Phosphotransferase) domain 1"/>
    <property type="match status" value="1"/>
</dbReference>
<dbReference type="InterPro" id="IPR011009">
    <property type="entry name" value="Kinase-like_dom_sf"/>
</dbReference>
<dbReference type="InterPro" id="IPR018451">
    <property type="entry name" value="NAF/FISL_domain"/>
</dbReference>
<dbReference type="InterPro" id="IPR004041">
    <property type="entry name" value="NAF_dom"/>
</dbReference>
<dbReference type="InterPro" id="IPR000719">
    <property type="entry name" value="Prot_kinase_dom"/>
</dbReference>
<dbReference type="InterPro" id="IPR017441">
    <property type="entry name" value="Protein_kinase_ATP_BS"/>
</dbReference>
<dbReference type="InterPro" id="IPR008271">
    <property type="entry name" value="Ser/Thr_kinase_AS"/>
</dbReference>
<dbReference type="PANTHER" id="PTHR43895">
    <property type="entry name" value="CALCIUM/CALMODULIN-DEPENDENT PROTEIN KINASE KINASE-RELATED"/>
    <property type="match status" value="1"/>
</dbReference>
<dbReference type="PANTHER" id="PTHR43895:SF160">
    <property type="entry name" value="CBL-INTERACTING SERINE_THREONINE-PROTEIN KINASE 14"/>
    <property type="match status" value="1"/>
</dbReference>
<dbReference type="Pfam" id="PF03822">
    <property type="entry name" value="NAF"/>
    <property type="match status" value="1"/>
</dbReference>
<dbReference type="Pfam" id="PF00069">
    <property type="entry name" value="Pkinase"/>
    <property type="match status" value="1"/>
</dbReference>
<dbReference type="SMART" id="SM00220">
    <property type="entry name" value="S_TKc"/>
    <property type="match status" value="1"/>
</dbReference>
<dbReference type="SUPFAM" id="SSF56112">
    <property type="entry name" value="Protein kinase-like (PK-like)"/>
    <property type="match status" value="1"/>
</dbReference>
<dbReference type="PROSITE" id="PS50816">
    <property type="entry name" value="NAF"/>
    <property type="match status" value="1"/>
</dbReference>
<dbReference type="PROSITE" id="PS00107">
    <property type="entry name" value="PROTEIN_KINASE_ATP"/>
    <property type="match status" value="1"/>
</dbReference>
<dbReference type="PROSITE" id="PS50011">
    <property type="entry name" value="PROTEIN_KINASE_DOM"/>
    <property type="match status" value="1"/>
</dbReference>
<dbReference type="PROSITE" id="PS00108">
    <property type="entry name" value="PROTEIN_KINASE_ST"/>
    <property type="match status" value="1"/>
</dbReference>
<protein>
    <recommendedName>
        <fullName>CBL-interacting serine/threonine-protein kinase 14</fullName>
        <ecNumber>2.7.11.1</ecNumber>
    </recommendedName>
    <alternativeName>
        <fullName>SNF1-related kinase 3.15</fullName>
    </alternativeName>
    <alternativeName>
        <fullName>SOS2-like protein kinase PKS24</fullName>
    </alternativeName>
    <alternativeName>
        <fullName>Serine/threonine-protein kinase SR1</fullName>
        <shortName>AtSR1</shortName>
    </alternativeName>
</protein>
<name>CIPKE_ARATH</name>
<reference key="1">
    <citation type="journal article" date="2001" name="EMBO J.">
        <title>The NAF domain defines a novel protein-protein interaction module conserved in Ca(2+)-regulated kinases.</title>
        <authorList>
            <person name="Albrecht V."/>
            <person name="Ritz O."/>
            <person name="Linder S."/>
            <person name="Harter K."/>
            <person name="Kudla J."/>
        </authorList>
    </citation>
    <scope>NUCLEOTIDE SEQUENCE [MRNA]</scope>
</reference>
<reference key="2">
    <citation type="journal article" date="2001" name="Mol. Gen. Genet.">
        <title>Two novel genes encoding SNF-1 related protein kinases from Arabidopsis thaliana: differential accumulation of AtSR1 and AtSR2 transcripts in response to cytokinins and sugars, and phosphorylation of sucrose synthase by AtSR2.</title>
        <authorList>
            <person name="Chikano H."/>
            <person name="Ogawa M."/>
            <person name="Ikeda Y."/>
            <person name="Koizumi N."/>
            <person name="Kusano T."/>
            <person name="Sano H."/>
        </authorList>
    </citation>
    <scope>NUCLEOTIDE SEQUENCE [MRNA]</scope>
    <scope>INDUCTION</scope>
    <source>
        <strain>cv. Columbia</strain>
    </source>
</reference>
<reference key="3">
    <citation type="journal article" date="2000" name="Nature">
        <title>Sequence and analysis of chromosome 5 of the plant Arabidopsis thaliana.</title>
        <authorList>
            <person name="Tabata S."/>
            <person name="Kaneko T."/>
            <person name="Nakamura Y."/>
            <person name="Kotani H."/>
            <person name="Kato T."/>
            <person name="Asamizu E."/>
            <person name="Miyajima N."/>
            <person name="Sasamoto S."/>
            <person name="Kimura T."/>
            <person name="Hosouchi T."/>
            <person name="Kawashima K."/>
            <person name="Kohara M."/>
            <person name="Matsumoto M."/>
            <person name="Matsuno A."/>
            <person name="Muraki A."/>
            <person name="Nakayama S."/>
            <person name="Nakazaki N."/>
            <person name="Naruo K."/>
            <person name="Okumura S."/>
            <person name="Shinpo S."/>
            <person name="Takeuchi C."/>
            <person name="Wada T."/>
            <person name="Watanabe A."/>
            <person name="Yamada M."/>
            <person name="Yasuda M."/>
            <person name="Sato S."/>
            <person name="de la Bastide M."/>
            <person name="Huang E."/>
            <person name="Spiegel L."/>
            <person name="Gnoj L."/>
            <person name="O'Shaughnessy A."/>
            <person name="Preston R."/>
            <person name="Habermann K."/>
            <person name="Murray J."/>
            <person name="Johnson D."/>
            <person name="Rohlfing T."/>
            <person name="Nelson J."/>
            <person name="Stoneking T."/>
            <person name="Pepin K."/>
            <person name="Spieth J."/>
            <person name="Sekhon M."/>
            <person name="Armstrong J."/>
            <person name="Becker M."/>
            <person name="Belter E."/>
            <person name="Cordum H."/>
            <person name="Cordes M."/>
            <person name="Courtney L."/>
            <person name="Courtney W."/>
            <person name="Dante M."/>
            <person name="Du H."/>
            <person name="Edwards J."/>
            <person name="Fryman J."/>
            <person name="Haakensen B."/>
            <person name="Lamar E."/>
            <person name="Latreille P."/>
            <person name="Leonard S."/>
            <person name="Meyer R."/>
            <person name="Mulvaney E."/>
            <person name="Ozersky P."/>
            <person name="Riley A."/>
            <person name="Strowmatt C."/>
            <person name="Wagner-McPherson C."/>
            <person name="Wollam A."/>
            <person name="Yoakum M."/>
            <person name="Bell M."/>
            <person name="Dedhia N."/>
            <person name="Parnell L."/>
            <person name="Shah R."/>
            <person name="Rodriguez M."/>
            <person name="Hoon See L."/>
            <person name="Vil D."/>
            <person name="Baker J."/>
            <person name="Kirchoff K."/>
            <person name="Toth K."/>
            <person name="King L."/>
            <person name="Bahret A."/>
            <person name="Miller B."/>
            <person name="Marra M.A."/>
            <person name="Martienssen R."/>
            <person name="McCombie W.R."/>
            <person name="Wilson R.K."/>
            <person name="Murphy G."/>
            <person name="Bancroft I."/>
            <person name="Volckaert G."/>
            <person name="Wambutt R."/>
            <person name="Duesterhoeft A."/>
            <person name="Stiekema W."/>
            <person name="Pohl T."/>
            <person name="Entian K.-D."/>
            <person name="Terryn N."/>
            <person name="Hartley N."/>
            <person name="Bent E."/>
            <person name="Johnson S."/>
            <person name="Langham S.-A."/>
            <person name="McCullagh B."/>
            <person name="Robben J."/>
            <person name="Grymonprez B."/>
            <person name="Zimmermann W."/>
            <person name="Ramsperger U."/>
            <person name="Wedler H."/>
            <person name="Balke K."/>
            <person name="Wedler E."/>
            <person name="Peters S."/>
            <person name="van Staveren M."/>
            <person name="Dirkse W."/>
            <person name="Mooijman P."/>
            <person name="Klein Lankhorst R."/>
            <person name="Weitzenegger T."/>
            <person name="Bothe G."/>
            <person name="Rose M."/>
            <person name="Hauf J."/>
            <person name="Berneiser S."/>
            <person name="Hempel S."/>
            <person name="Feldpausch M."/>
            <person name="Lamberth S."/>
            <person name="Villarroel R."/>
            <person name="Gielen J."/>
            <person name="Ardiles W."/>
            <person name="Bents O."/>
            <person name="Lemcke K."/>
            <person name="Kolesov G."/>
            <person name="Mayer K.F.X."/>
            <person name="Rudd S."/>
            <person name="Schoof H."/>
            <person name="Schueller C."/>
            <person name="Zaccaria P."/>
            <person name="Mewes H.-W."/>
            <person name="Bevan M."/>
            <person name="Fransz P.F."/>
        </authorList>
    </citation>
    <scope>NUCLEOTIDE SEQUENCE [LARGE SCALE GENOMIC DNA]</scope>
    <source>
        <strain>cv. Columbia</strain>
    </source>
</reference>
<reference key="4">
    <citation type="journal article" date="2017" name="Plant J.">
        <title>Araport11: a complete reannotation of the Arabidopsis thaliana reference genome.</title>
        <authorList>
            <person name="Cheng C.Y."/>
            <person name="Krishnakumar V."/>
            <person name="Chan A.P."/>
            <person name="Thibaud-Nissen F."/>
            <person name="Schobel S."/>
            <person name="Town C.D."/>
        </authorList>
    </citation>
    <scope>GENOME REANNOTATION</scope>
    <source>
        <strain>cv. Columbia</strain>
    </source>
</reference>
<reference key="5">
    <citation type="journal article" date="2003" name="Science">
        <title>Empirical analysis of transcriptional activity in the Arabidopsis genome.</title>
        <authorList>
            <person name="Yamada K."/>
            <person name="Lim J."/>
            <person name="Dale J.M."/>
            <person name="Chen H."/>
            <person name="Shinn P."/>
            <person name="Palm C.J."/>
            <person name="Southwick A.M."/>
            <person name="Wu H.C."/>
            <person name="Kim C.J."/>
            <person name="Nguyen M."/>
            <person name="Pham P.K."/>
            <person name="Cheuk R.F."/>
            <person name="Karlin-Newmann G."/>
            <person name="Liu S.X."/>
            <person name="Lam B."/>
            <person name="Sakano H."/>
            <person name="Wu T."/>
            <person name="Yu G."/>
            <person name="Miranda M."/>
            <person name="Quach H.L."/>
            <person name="Tripp M."/>
            <person name="Chang C.H."/>
            <person name="Lee J.M."/>
            <person name="Toriumi M.J."/>
            <person name="Chan M.M."/>
            <person name="Tang C.C."/>
            <person name="Onodera C.S."/>
            <person name="Deng J.M."/>
            <person name="Akiyama K."/>
            <person name="Ansari Y."/>
            <person name="Arakawa T."/>
            <person name="Banh J."/>
            <person name="Banno F."/>
            <person name="Bowser L."/>
            <person name="Brooks S.Y."/>
            <person name="Carninci P."/>
            <person name="Chao Q."/>
            <person name="Choy N."/>
            <person name="Enju A."/>
            <person name="Goldsmith A.D."/>
            <person name="Gurjal M."/>
            <person name="Hansen N.F."/>
            <person name="Hayashizaki Y."/>
            <person name="Johnson-Hopson C."/>
            <person name="Hsuan V.W."/>
            <person name="Iida K."/>
            <person name="Karnes M."/>
            <person name="Khan S."/>
            <person name="Koesema E."/>
            <person name="Ishida J."/>
            <person name="Jiang P.X."/>
            <person name="Jones T."/>
            <person name="Kawai J."/>
            <person name="Kamiya A."/>
            <person name="Meyers C."/>
            <person name="Nakajima M."/>
            <person name="Narusaka M."/>
            <person name="Seki M."/>
            <person name="Sakurai T."/>
            <person name="Satou M."/>
            <person name="Tamse R."/>
            <person name="Vaysberg M."/>
            <person name="Wallender E.K."/>
            <person name="Wong C."/>
            <person name="Yamamura Y."/>
            <person name="Yuan S."/>
            <person name="Shinozaki K."/>
            <person name="Davis R.W."/>
            <person name="Theologis A."/>
            <person name="Ecker J.R."/>
        </authorList>
    </citation>
    <scope>NUCLEOTIDE SEQUENCE [LARGE SCALE MRNA]</scope>
    <source>
        <strain>cv. Columbia</strain>
    </source>
</reference>
<reference key="6">
    <citation type="journal article" date="2001" name="Plant Cell Physiol.">
        <title>An Arabidopsis SNF1-related protein kinase, AtSR1, interacts with a calcium-binding protein, AtCBL2, of which transcripts respond to light.</title>
        <authorList>
            <person name="Nozawa A."/>
            <person name="Koizumi N."/>
            <person name="Sano H."/>
        </authorList>
    </citation>
    <scope>INTERACTION WITH CBL2</scope>
    <scope>TISSUE SPECIFICITY</scope>
</reference>
<reference key="7">
    <citation type="journal article" date="2003" name="Plant Physiol.">
        <title>The Arabidopsis CDPK-SnRK superfamily of protein kinases.</title>
        <authorList>
            <person name="Hrabak E.M."/>
            <person name="Chan C.W.M."/>
            <person name="Gribskov M."/>
            <person name="Harper J.F."/>
            <person name="Choi J.H."/>
            <person name="Halford N."/>
            <person name="Kudla J."/>
            <person name="Luan S."/>
            <person name="Nimmo H.G."/>
            <person name="Sussman M.R."/>
            <person name="Thomas M."/>
            <person name="Walker-Simmons K."/>
            <person name="Zhu J.-K."/>
            <person name="Harmon A.C."/>
        </authorList>
    </citation>
    <scope>GENE FAMILY</scope>
    <scope>NOMENCLATURE</scope>
</reference>
<reference key="8">
    <citation type="journal article" date="2005" name="Biosci. Biotechnol. Biochem.">
        <title>Sugar responsible and tissue specific expression of a gene encoding AtCIPK14, an Arabidopsis CBL-interacting protein kinase.</title>
        <authorList>
            <person name="Lee E.-J."/>
            <person name="Iai H."/>
            <person name="Sano H."/>
            <person name="Koizumi N."/>
        </authorList>
    </citation>
    <scope>INDUCTION</scope>
    <scope>DEVELOPMENTAL STAGE</scope>
</reference>
<reference key="9">
    <citation type="journal article" date="2010" name="Plant J.">
        <title>CBL-mediated targeting of CIPKs facilitates the decoding of calcium signals emanating from distinct cellular stores.</title>
        <authorList>
            <person name="Batistic O."/>
            <person name="Waadt R."/>
            <person name="Steinhorst L."/>
            <person name="Held K."/>
            <person name="Kudla J."/>
        </authorList>
    </citation>
    <scope>SUBCELLULAR LOCATION</scope>
    <scope>INTERACTION WITH CBL2; CBL3 AND CBL8</scope>
</reference>
<reference key="10">
    <citation type="journal article" date="2008" name="J. Mol. Biol.">
        <title>The crystal structure of plant-specific calcium-binding protein AtCBL2 in complex with the regulatory domain of AtCIPK14.</title>
        <authorList>
            <person name="Akaboshi M."/>
            <person name="Hashimoto H."/>
            <person name="Ishida H."/>
            <person name="Saijo S."/>
            <person name="Koizumi N."/>
            <person name="Sato M."/>
            <person name="Shimizu T."/>
        </authorList>
    </citation>
    <scope>X-RAY CRYSTALLOGRAPHY (1.20 ANGSTROMS) OF 305-427 IN COMPLEX WITH CBL2</scope>
    <scope>MUTAGENESIS OF ASN-311; PHE-313; ILE-316; SER-319; PHE-322; LEU-327; PHE-328 AND ARG-339</scope>
</reference>
<reference key="11">
    <citation type="journal article" date="2014" name="Biochem. Biophys. Res. Commun.">
        <title>Arabidopsis CIPK14 positively regulates glucose response.</title>
        <authorList>
            <person name="Yan J."/>
            <person name="Niu F."/>
            <person name="Liu W.Z."/>
            <person name="Zhang H."/>
            <person name="Wang B."/>
            <person name="Lan W."/>
            <person name="Che Y."/>
            <person name="Yang B."/>
            <person name="Luan S."/>
            <person name="Jiang Y.Q."/>
        </authorList>
    </citation>
    <scope>TISSUE SPECIFICITY</scope>
    <scope>INDUCTION</scope>
    <scope>SUBCELLULAR LOCATION</scope>
    <scope>INTERACTION WITH CBL2; CBL3; CBL9; KIN10 AND KIN11</scope>
    <scope>DISRUPTION PHENOTYPE</scope>
</reference>
<evidence type="ECO:0000250" key="1"/>
<evidence type="ECO:0000250" key="2">
    <source>
        <dbReference type="UniProtKB" id="Q38997"/>
    </source>
</evidence>
<evidence type="ECO:0000250" key="3">
    <source>
        <dbReference type="UniProtKB" id="Q93V58"/>
    </source>
</evidence>
<evidence type="ECO:0000255" key="4">
    <source>
        <dbReference type="PROSITE-ProRule" id="PRU00159"/>
    </source>
</evidence>
<evidence type="ECO:0000255" key="5">
    <source>
        <dbReference type="PROSITE-ProRule" id="PRU00256"/>
    </source>
</evidence>
<evidence type="ECO:0000255" key="6">
    <source>
        <dbReference type="PROSITE-ProRule" id="PRU10027"/>
    </source>
</evidence>
<evidence type="ECO:0000269" key="7">
    <source>
    </source>
</evidence>
<evidence type="ECO:0000269" key="8">
    <source>
    </source>
</evidence>
<evidence type="ECO:0000269" key="9">
    <source>
    </source>
</evidence>
<evidence type="ECO:0000269" key="10">
    <source>
    </source>
</evidence>
<evidence type="ECO:0000269" key="11">
    <source>
    </source>
</evidence>
<evidence type="ECO:0000269" key="12">
    <source>
    </source>
</evidence>
<evidence type="ECO:0000305" key="13"/>
<evidence type="ECO:0007829" key="14">
    <source>
        <dbReference type="PDB" id="2ZFD"/>
    </source>
</evidence>
<comment type="function">
    <text evidence="1">CIPK serine-threonine protein kinases interact with CBL proteins. Binding of a CBL protein to the regulatory NAF domain of CIPK protein lead to the activation of the kinase in a calcium-dependent manner (By similarity).</text>
</comment>
<comment type="catalytic activity">
    <reaction>
        <text>L-seryl-[protein] + ATP = O-phospho-L-seryl-[protein] + ADP + H(+)</text>
        <dbReference type="Rhea" id="RHEA:17989"/>
        <dbReference type="Rhea" id="RHEA-COMP:9863"/>
        <dbReference type="Rhea" id="RHEA-COMP:11604"/>
        <dbReference type="ChEBI" id="CHEBI:15378"/>
        <dbReference type="ChEBI" id="CHEBI:29999"/>
        <dbReference type="ChEBI" id="CHEBI:30616"/>
        <dbReference type="ChEBI" id="CHEBI:83421"/>
        <dbReference type="ChEBI" id="CHEBI:456216"/>
        <dbReference type="EC" id="2.7.11.1"/>
    </reaction>
</comment>
<comment type="catalytic activity">
    <reaction>
        <text>L-threonyl-[protein] + ATP = O-phospho-L-threonyl-[protein] + ADP + H(+)</text>
        <dbReference type="Rhea" id="RHEA:46608"/>
        <dbReference type="Rhea" id="RHEA-COMP:11060"/>
        <dbReference type="Rhea" id="RHEA-COMP:11605"/>
        <dbReference type="ChEBI" id="CHEBI:15378"/>
        <dbReference type="ChEBI" id="CHEBI:30013"/>
        <dbReference type="ChEBI" id="CHEBI:30616"/>
        <dbReference type="ChEBI" id="CHEBI:61977"/>
        <dbReference type="ChEBI" id="CHEBI:456216"/>
        <dbReference type="EC" id="2.7.11.1"/>
    </reaction>
</comment>
<comment type="cofactor">
    <cofactor evidence="1">
        <name>Mn(2+)</name>
        <dbReference type="ChEBI" id="CHEBI:29035"/>
    </cofactor>
</comment>
<comment type="subunit">
    <text evidence="8 10 11 12">Interacts with CBL2 (PubMed:11577192, PubMed:18237745, PubMed:19832944, PubMed:25058458). Interacts with CBL3 (PubMed:19832944, PubMed:25058458). Interacts with CBL8 (PubMed:19832944). Interacts with CBL9 (PubMed:25058458). Interacts with KIN10 and KIN11 (PubMed:25058458).</text>
</comment>
<comment type="interaction">
    <interactant intactId="EBI-307576">
        <id>Q9LZW4</id>
    </interactant>
    <interactant intactId="EBI-4473692">
        <id>O80575</id>
        <label>At2g44050</label>
    </interactant>
    <organismsDiffer>false</organismsDiffer>
    <experiments>4</experiments>
</comment>
<comment type="interaction">
    <interactant intactId="EBI-307576">
        <id>Q9LZW4</id>
    </interactant>
    <interactant intactId="EBI-4438646">
        <id>O22873</id>
        <label>BZIP18</label>
    </interactant>
    <organismsDiffer>false</organismsDiffer>
    <experiments>3</experiments>
</comment>
<comment type="interaction">
    <interactant intactId="EBI-307576">
        <id>Q9LZW4</id>
    </interactant>
    <interactant intactId="EBI-485991">
        <id>Q8LAS7</id>
        <label>CBL2</label>
    </interactant>
    <organismsDiffer>false</organismsDiffer>
    <experiments>9</experiments>
</comment>
<comment type="interaction">
    <interactant intactId="EBI-307576">
        <id>Q9LZW4</id>
    </interactant>
    <interactant intactId="EBI-1792336">
        <id>Q39204</id>
        <label>MYC2</label>
    </interactant>
    <organismsDiffer>false</organismsDiffer>
    <experiments>5</experiments>
</comment>
<comment type="subcellular location">
    <subcellularLocation>
        <location evidence="11 12">Cytoplasm</location>
    </subcellularLocation>
    <subcellularLocation>
        <location evidence="11 12">Nucleus</location>
    </subcellularLocation>
    <text>Targeted to the tonoplast when interacting with CBL2 or CBL3 and to the cell membrane when interacting with CBL8.</text>
</comment>
<comment type="tissue specificity">
    <text evidence="8 12">Predominant in roots, cauline leaves, and flowers (PubMed:11577192). Ubiquitous with highest expression in 7-day-old seedlings and flower buds, followed by that in cauline leaves and young siliques (PubMed:25058458).</text>
</comment>
<comment type="developmental stage">
    <text evidence="9">First observed in imbibed seeds. Mostly localized in hypocotyls during germination and in seedlings. In mature plants, confined to vascular tissues of leaves and roots. In flowers, expressed in the vascular bundle of the stamen filament and in the stigma, where the filament joins the pistil.</text>
</comment>
<comment type="induction">
    <text evidence="7 9 12">By light in a cytokinin-dependent manner and N(6)-benzylaminopurine (BA). Also induced by sucrose, glucose and fructose. Induced by several abiotic stresses like salt, cold, heat, oxidative, drought, PEG8000, glucose treatments as well exogenous abscisic acid (ABA) application (PubMed:25058458).</text>
</comment>
<comment type="domain">
    <text evidence="1">The activation loop within the kinase domain is the target of phosphorylation/activation by upstream protein kinases. The PPI motif mediates the interaction with the ABI (abscisic acid-insensitive) phosphatases (By similarity).</text>
</comment>
<comment type="disruption phenotype">
    <text evidence="12">Increased sensitivity to glucose.</text>
</comment>
<comment type="similarity">
    <text evidence="13">Belongs to the protein kinase superfamily. CAMK Ser/Thr protein kinase family. SNF1 subfamily.</text>
</comment>
<sequence length="442" mass="50298">MVDSDPVEFPPENRRGQLFGKYEVGKLVGCGAFAKVYHGRSTATGQSVAIKVVSKQRLQKGGLNGNIQREIAIMHRLRHPSIVRLFEVLATKSKIFFVMEFAKGGELFAKVSKGRFCEDLSRRYFQQLISAVGYCHSRGIFHRDLKPENLLLDEKLDLKISDFGLSALTDQIRPDGLLHTLCGTPAYVAPEVLAKKGYDGAKIDIWSCGIILFVLNAGYLPFNDHNLMVMYRKIYKGEFRIPKWTSPDLRRLLTRLLDTNPQTRITIEEIIHDPWFKQGYDDRMSKFHLEDSDMKLPADETDSEMGARRMNAFDIISGSPGFNLSGLFGDARKYDRVERFVSAWTAERVVERLEEIVSAENLTVAKKETWGMKIEGQKGNFAMVVEINQLTDELVMIEVRKRQRAAASGRDLWTDTLRPFFVELVHESDQTDPEPTQVHTTS</sequence>
<organism>
    <name type="scientific">Arabidopsis thaliana</name>
    <name type="common">Mouse-ear cress</name>
    <dbReference type="NCBI Taxonomy" id="3702"/>
    <lineage>
        <taxon>Eukaryota</taxon>
        <taxon>Viridiplantae</taxon>
        <taxon>Streptophyta</taxon>
        <taxon>Embryophyta</taxon>
        <taxon>Tracheophyta</taxon>
        <taxon>Spermatophyta</taxon>
        <taxon>Magnoliopsida</taxon>
        <taxon>eudicotyledons</taxon>
        <taxon>Gunneridae</taxon>
        <taxon>Pentapetalae</taxon>
        <taxon>rosids</taxon>
        <taxon>malvids</taxon>
        <taxon>Brassicales</taxon>
        <taxon>Brassicaceae</taxon>
        <taxon>Camelineae</taxon>
        <taxon>Arabidopsis</taxon>
    </lineage>
</organism>
<keyword id="KW-0002">3D-structure</keyword>
<keyword id="KW-0067">ATP-binding</keyword>
<keyword id="KW-0963">Cytoplasm</keyword>
<keyword id="KW-0418">Kinase</keyword>
<keyword id="KW-0464">Manganese</keyword>
<keyword id="KW-0547">Nucleotide-binding</keyword>
<keyword id="KW-0539">Nucleus</keyword>
<keyword id="KW-0597">Phosphoprotein</keyword>
<keyword id="KW-1185">Reference proteome</keyword>
<keyword id="KW-0723">Serine/threonine-protein kinase</keyword>
<keyword id="KW-0808">Transferase</keyword>
<accession>Q9LZW4</accession>